<reference key="1">
    <citation type="journal article" date="1997" name="Anim. Genet.">
        <title>Isolation and mapping of two chicken POU family genes and the identification of a syntenic group with human and mouse.</title>
        <authorList>
            <person name="Heltemes L.M."/>
            <person name="Tuggle C.K."/>
            <person name="Lamont S.J."/>
        </authorList>
    </citation>
    <scope>NUCLEOTIDE SEQUENCE [MRNA]</scope>
    <source>
        <strain>White leghorn</strain>
        <tissue>Spleen</tissue>
    </source>
</reference>
<keyword id="KW-0963">Cytoplasm</keyword>
<keyword id="KW-0217">Developmental protein</keyword>
<keyword id="KW-0238">DNA-binding</keyword>
<keyword id="KW-0371">Homeobox</keyword>
<keyword id="KW-0539">Nucleus</keyword>
<keyword id="KW-1185">Reference proteome</keyword>
<keyword id="KW-0804">Transcription</keyword>
<keyword id="KW-0805">Transcription regulation</keyword>
<protein>
    <recommendedName>
        <fullName>POU domain, class 4, transcription factor 1</fullName>
    </recommendedName>
    <alternativeName>
        <fullName>Brain-specific homeobox/POU domain protein 3A</fullName>
        <shortName>Brain-3A</shortName>
        <shortName>Brn-3A</shortName>
    </alternativeName>
</protein>
<proteinExistence type="evidence at transcript level"/>
<feature type="chain" id="PRO_0000100739" description="POU domain, class 4, transcription factor 1">
    <location>
        <begin position="1" status="less than"/>
        <end position="116" status="greater than"/>
    </location>
</feature>
<feature type="domain" description="POU-specific" evidence="3">
    <location>
        <begin position="1" status="less than"/>
        <end position="54"/>
    </location>
</feature>
<feature type="DNA-binding region" description="Homeobox" evidence="2">
    <location>
        <begin position="72"/>
        <end position="116" status="greater than"/>
    </location>
</feature>
<feature type="region of interest" description="Disordered" evidence="4">
    <location>
        <begin position="56"/>
        <end position="79"/>
    </location>
</feature>
<feature type="non-terminal residue">
    <location>
        <position position="1"/>
    </location>
</feature>
<feature type="non-terminal residue">
    <location>
        <position position="116"/>
    </location>
</feature>
<name>PO4F1_CHICK</name>
<accession>P55968</accession>
<sequence length="116" mass="12703">VTQADVGSALANLKIPGVGSLSQSTICRFESLTLSHNNMIALKPILQAWLEEAEGAQREKMNKPELFNGGEKKRKRTSIAAPEKRSLEAYFAVQPRPSSEKIAAIAEKLDLKKNVV</sequence>
<evidence type="ECO:0000250" key="1">
    <source>
        <dbReference type="UniProtKB" id="P17208"/>
    </source>
</evidence>
<evidence type="ECO:0000255" key="2">
    <source>
        <dbReference type="PROSITE-ProRule" id="PRU00108"/>
    </source>
</evidence>
<evidence type="ECO:0000255" key="3">
    <source>
        <dbReference type="PROSITE-ProRule" id="PRU00530"/>
    </source>
</evidence>
<evidence type="ECO:0000256" key="4">
    <source>
        <dbReference type="SAM" id="MobiDB-lite"/>
    </source>
</evidence>
<evidence type="ECO:0000305" key="5"/>
<dbReference type="EMBL" id="U77642">
    <property type="protein sequence ID" value="AAD03154.1"/>
    <property type="molecule type" value="mRNA"/>
</dbReference>
<dbReference type="SMR" id="P55968"/>
<dbReference type="FunCoup" id="P55968">
    <property type="interactions" value="121"/>
</dbReference>
<dbReference type="STRING" id="9031.ENSGALP00000046501"/>
<dbReference type="VEuPathDB" id="HostDB:geneid_100857623"/>
<dbReference type="InParanoid" id="P55968"/>
<dbReference type="OrthoDB" id="6358449at2759"/>
<dbReference type="Proteomes" id="UP000000539">
    <property type="component" value="Unassembled WGS sequence"/>
</dbReference>
<dbReference type="GO" id="GO:0005737">
    <property type="term" value="C:cytoplasm"/>
    <property type="evidence" value="ECO:0000250"/>
    <property type="project" value="UniProtKB"/>
</dbReference>
<dbReference type="GO" id="GO:0005634">
    <property type="term" value="C:nucleus"/>
    <property type="evidence" value="ECO:0000250"/>
    <property type="project" value="UniProtKB"/>
</dbReference>
<dbReference type="GO" id="GO:0003700">
    <property type="term" value="F:DNA-binding transcription factor activity"/>
    <property type="evidence" value="ECO:0007669"/>
    <property type="project" value="InterPro"/>
</dbReference>
<dbReference type="GO" id="GO:0043565">
    <property type="term" value="F:sequence-specific DNA binding"/>
    <property type="evidence" value="ECO:0000250"/>
    <property type="project" value="UniProtKB"/>
</dbReference>
<dbReference type="GO" id="GO:0003697">
    <property type="term" value="F:single-stranded DNA binding"/>
    <property type="evidence" value="ECO:0000250"/>
    <property type="project" value="UniProtKB"/>
</dbReference>
<dbReference type="GO" id="GO:0071345">
    <property type="term" value="P:cellular response to cytokine stimulus"/>
    <property type="evidence" value="ECO:0000250"/>
    <property type="project" value="UniProtKB"/>
</dbReference>
<dbReference type="GO" id="GO:0071392">
    <property type="term" value="P:cellular response to estradiol stimulus"/>
    <property type="evidence" value="ECO:0000250"/>
    <property type="project" value="UniProtKB"/>
</dbReference>
<dbReference type="GO" id="GO:0031175">
    <property type="term" value="P:neuron projection development"/>
    <property type="evidence" value="ECO:0000250"/>
    <property type="project" value="UniProtKB"/>
</dbReference>
<dbReference type="GO" id="GO:0010628">
    <property type="term" value="P:positive regulation of gene expression"/>
    <property type="evidence" value="ECO:0000250"/>
    <property type="project" value="UniProtKB"/>
</dbReference>
<dbReference type="GO" id="GO:0045672">
    <property type="term" value="P:positive regulation of osteoclast differentiation"/>
    <property type="evidence" value="ECO:0000250"/>
    <property type="project" value="UniProtKB"/>
</dbReference>
<dbReference type="GO" id="GO:2000679">
    <property type="term" value="P:positive regulation of transcription regulatory region DNA binding"/>
    <property type="evidence" value="ECO:0000250"/>
    <property type="project" value="UniProtKB"/>
</dbReference>
<dbReference type="GO" id="GO:0051090">
    <property type="term" value="P:regulation of DNA-binding transcription factor activity"/>
    <property type="evidence" value="ECO:0000250"/>
    <property type="project" value="UniProtKB"/>
</dbReference>
<dbReference type="CDD" id="cd00086">
    <property type="entry name" value="homeodomain"/>
    <property type="match status" value="1"/>
</dbReference>
<dbReference type="FunFam" id="1.10.260.40:FF:000007">
    <property type="entry name" value="POU domain protein"/>
    <property type="match status" value="1"/>
</dbReference>
<dbReference type="Gene3D" id="1.10.10.60">
    <property type="entry name" value="Homeodomain-like"/>
    <property type="match status" value="1"/>
</dbReference>
<dbReference type="Gene3D" id="1.10.260.40">
    <property type="entry name" value="lambda repressor-like DNA-binding domains"/>
    <property type="match status" value="1"/>
</dbReference>
<dbReference type="InterPro" id="IPR001356">
    <property type="entry name" value="HD"/>
</dbReference>
<dbReference type="InterPro" id="IPR009057">
    <property type="entry name" value="Homeodomain-like_sf"/>
</dbReference>
<dbReference type="InterPro" id="IPR010982">
    <property type="entry name" value="Lambda_DNA-bd_dom_sf"/>
</dbReference>
<dbReference type="InterPro" id="IPR013847">
    <property type="entry name" value="POU"/>
</dbReference>
<dbReference type="InterPro" id="IPR000327">
    <property type="entry name" value="POU_dom"/>
</dbReference>
<dbReference type="InterPro" id="IPR050255">
    <property type="entry name" value="POU_domain_TF"/>
</dbReference>
<dbReference type="PANTHER" id="PTHR11636">
    <property type="entry name" value="POU DOMAIN"/>
    <property type="match status" value="1"/>
</dbReference>
<dbReference type="PANTHER" id="PTHR11636:SF42">
    <property type="entry name" value="POU DOMAIN, CLASS 4, TRANSCRIPTION FACTOR 1"/>
    <property type="match status" value="1"/>
</dbReference>
<dbReference type="Pfam" id="PF00046">
    <property type="entry name" value="Homeodomain"/>
    <property type="match status" value="1"/>
</dbReference>
<dbReference type="Pfam" id="PF00157">
    <property type="entry name" value="Pou"/>
    <property type="match status" value="1"/>
</dbReference>
<dbReference type="PRINTS" id="PR00028">
    <property type="entry name" value="POUDOMAIN"/>
</dbReference>
<dbReference type="SMART" id="SM00352">
    <property type="entry name" value="POU"/>
    <property type="match status" value="1"/>
</dbReference>
<dbReference type="SUPFAM" id="SSF46689">
    <property type="entry name" value="Homeodomain-like"/>
    <property type="match status" value="1"/>
</dbReference>
<dbReference type="SUPFAM" id="SSF47413">
    <property type="entry name" value="lambda repressor-like DNA-binding domains"/>
    <property type="match status" value="1"/>
</dbReference>
<dbReference type="PROSITE" id="PS50071">
    <property type="entry name" value="HOMEOBOX_2"/>
    <property type="match status" value="1"/>
</dbReference>
<dbReference type="PROSITE" id="PS00465">
    <property type="entry name" value="POU_2"/>
    <property type="match status" value="1"/>
</dbReference>
<dbReference type="PROSITE" id="PS51179">
    <property type="entry name" value="POU_3"/>
    <property type="match status" value="1"/>
</dbReference>
<comment type="function">
    <text evidence="1">Multifunctional transcription factor with different regions mediating its different effects. Acts by binding (via its C-terminal domain) to sequences related to the consensus octamer motif 5'-ATGCAAAT-3' in the regulatory regions of its target genes. Regulates the expression of specific genes involved in differentiation and survival within a subset of neuronal lineages. It has been shown that activation of some of these genes requires its N-terminal domain, maybe through a neuronal-specific cofactor.</text>
</comment>
<comment type="subcellular location">
    <subcellularLocation>
        <location evidence="1">Nucleus</location>
    </subcellularLocation>
    <subcellularLocation>
        <location evidence="1">Cytoplasm</location>
    </subcellularLocation>
</comment>
<comment type="similarity">
    <text evidence="5">Belongs to the POU transcription factor family. Class-4 subfamily.</text>
</comment>
<organism>
    <name type="scientific">Gallus gallus</name>
    <name type="common">Chicken</name>
    <dbReference type="NCBI Taxonomy" id="9031"/>
    <lineage>
        <taxon>Eukaryota</taxon>
        <taxon>Metazoa</taxon>
        <taxon>Chordata</taxon>
        <taxon>Craniata</taxon>
        <taxon>Vertebrata</taxon>
        <taxon>Euteleostomi</taxon>
        <taxon>Archelosauria</taxon>
        <taxon>Archosauria</taxon>
        <taxon>Dinosauria</taxon>
        <taxon>Saurischia</taxon>
        <taxon>Theropoda</taxon>
        <taxon>Coelurosauria</taxon>
        <taxon>Aves</taxon>
        <taxon>Neognathae</taxon>
        <taxon>Galloanserae</taxon>
        <taxon>Galliformes</taxon>
        <taxon>Phasianidae</taxon>
        <taxon>Phasianinae</taxon>
        <taxon>Gallus</taxon>
    </lineage>
</organism>
<gene>
    <name type="primary">POU4F1</name>
    <name type="synonym">BRN-3A</name>
    <name type="synonym">BRN3A</name>
</gene>